<dbReference type="EMBL" id="AB055388">
    <property type="protein sequence ID" value="BAB62529.1"/>
    <property type="molecule type" value="mRNA"/>
</dbReference>
<dbReference type="EMBL" id="AF151849">
    <property type="protein sequence ID" value="AAD34086.1"/>
    <property type="molecule type" value="mRNA"/>
</dbReference>
<dbReference type="EMBL" id="AL161452">
    <property type="status" value="NOT_ANNOTATED_CDS"/>
    <property type="molecule type" value="Genomic_DNA"/>
</dbReference>
<dbReference type="EMBL" id="BC004905">
    <property type="protein sequence ID" value="AAH04905.2"/>
    <property type="status" value="ALT_SEQ"/>
    <property type="molecule type" value="mRNA"/>
</dbReference>
<dbReference type="EMBL" id="BC008017">
    <property type="protein sequence ID" value="AAH08017.1"/>
    <property type="molecule type" value="mRNA"/>
</dbReference>
<dbReference type="EMBL" id="BC013108">
    <property type="protein sequence ID" value="AAH13108.1"/>
    <property type="molecule type" value="mRNA"/>
</dbReference>
<dbReference type="CCDS" id="CCDS6990.1"/>
<dbReference type="RefSeq" id="NP_001358330.1">
    <property type="nucleotide sequence ID" value="NM_001371401.1"/>
</dbReference>
<dbReference type="RefSeq" id="NP_057118.1">
    <property type="nucleotide sequence ID" value="NM_016034.5"/>
</dbReference>
<dbReference type="PDB" id="3J9M">
    <property type="method" value="EM"/>
    <property type="resolution" value="3.50 A"/>
    <property type="chains" value="AB=1-296"/>
</dbReference>
<dbReference type="PDB" id="6NU2">
    <property type="method" value="EM"/>
    <property type="resolution" value="3.90 A"/>
    <property type="chains" value="AB=58-274"/>
</dbReference>
<dbReference type="PDB" id="6NU3">
    <property type="method" value="EM"/>
    <property type="resolution" value="4.40 A"/>
    <property type="chains" value="AB=1-296"/>
</dbReference>
<dbReference type="PDB" id="6RW4">
    <property type="method" value="EM"/>
    <property type="resolution" value="2.97 A"/>
    <property type="chains" value="B=1-296"/>
</dbReference>
<dbReference type="PDB" id="6RW5">
    <property type="method" value="EM"/>
    <property type="resolution" value="3.14 A"/>
    <property type="chains" value="B=1-296"/>
</dbReference>
<dbReference type="PDB" id="6VLZ">
    <property type="method" value="EM"/>
    <property type="resolution" value="2.97 A"/>
    <property type="chains" value="AB=1-296"/>
</dbReference>
<dbReference type="PDB" id="6VMI">
    <property type="method" value="EM"/>
    <property type="resolution" value="2.96 A"/>
    <property type="chains" value="AB=1-296"/>
</dbReference>
<dbReference type="PDB" id="6ZM5">
    <property type="method" value="EM"/>
    <property type="resolution" value="2.89 A"/>
    <property type="chains" value="AB=1-296"/>
</dbReference>
<dbReference type="PDB" id="6ZM6">
    <property type="method" value="EM"/>
    <property type="resolution" value="2.59 A"/>
    <property type="chains" value="AB=1-296"/>
</dbReference>
<dbReference type="PDB" id="6ZS9">
    <property type="method" value="EM"/>
    <property type="resolution" value="4.00 A"/>
    <property type="chains" value="AB=1-296"/>
</dbReference>
<dbReference type="PDB" id="6ZSA">
    <property type="method" value="EM"/>
    <property type="resolution" value="4.00 A"/>
    <property type="chains" value="AB=1-296"/>
</dbReference>
<dbReference type="PDB" id="6ZSB">
    <property type="method" value="EM"/>
    <property type="resolution" value="4.50 A"/>
    <property type="chains" value="AB=1-296"/>
</dbReference>
<dbReference type="PDB" id="6ZSC">
    <property type="method" value="EM"/>
    <property type="resolution" value="3.50 A"/>
    <property type="chains" value="AB=1-296"/>
</dbReference>
<dbReference type="PDB" id="6ZSD">
    <property type="method" value="EM"/>
    <property type="resolution" value="3.70 A"/>
    <property type="chains" value="AB=1-296"/>
</dbReference>
<dbReference type="PDB" id="6ZSE">
    <property type="method" value="EM"/>
    <property type="resolution" value="5.00 A"/>
    <property type="chains" value="AB=1-275"/>
</dbReference>
<dbReference type="PDB" id="6ZSG">
    <property type="method" value="EM"/>
    <property type="resolution" value="4.00 A"/>
    <property type="chains" value="AB=1-296"/>
</dbReference>
<dbReference type="PDB" id="7A5F">
    <property type="method" value="EM"/>
    <property type="resolution" value="4.40 A"/>
    <property type="chains" value="B6=1-296"/>
</dbReference>
<dbReference type="PDB" id="7A5G">
    <property type="method" value="EM"/>
    <property type="resolution" value="4.33 A"/>
    <property type="chains" value="B6=1-296"/>
</dbReference>
<dbReference type="PDB" id="7A5I">
    <property type="method" value="EM"/>
    <property type="resolution" value="3.70 A"/>
    <property type="chains" value="B6=1-296"/>
</dbReference>
<dbReference type="PDB" id="7A5K">
    <property type="method" value="EM"/>
    <property type="resolution" value="3.70 A"/>
    <property type="chains" value="B6=1-296"/>
</dbReference>
<dbReference type="PDB" id="7L08">
    <property type="method" value="EM"/>
    <property type="resolution" value="3.49 A"/>
    <property type="chains" value="AB=1-296"/>
</dbReference>
<dbReference type="PDB" id="7OG4">
    <property type="method" value="EM"/>
    <property type="resolution" value="3.80 A"/>
    <property type="chains" value="AB=1-296"/>
</dbReference>
<dbReference type="PDB" id="7P2E">
    <property type="method" value="EM"/>
    <property type="resolution" value="2.40 A"/>
    <property type="chains" value="B=1-296"/>
</dbReference>
<dbReference type="PDB" id="7PNX">
    <property type="method" value="EM"/>
    <property type="resolution" value="2.76 A"/>
    <property type="chains" value="B=1-296"/>
</dbReference>
<dbReference type="PDB" id="7PNY">
    <property type="method" value="EM"/>
    <property type="resolution" value="3.06 A"/>
    <property type="chains" value="B=1-296"/>
</dbReference>
<dbReference type="PDB" id="7PNZ">
    <property type="method" value="EM"/>
    <property type="resolution" value="3.09 A"/>
    <property type="chains" value="B=1-296"/>
</dbReference>
<dbReference type="PDB" id="7PO0">
    <property type="method" value="EM"/>
    <property type="resolution" value="2.90 A"/>
    <property type="chains" value="B=1-296"/>
</dbReference>
<dbReference type="PDB" id="7PO1">
    <property type="method" value="EM"/>
    <property type="resolution" value="2.92 A"/>
    <property type="chains" value="B=1-296"/>
</dbReference>
<dbReference type="PDB" id="7PO2">
    <property type="method" value="EM"/>
    <property type="resolution" value="3.09 A"/>
    <property type="chains" value="B=1-296"/>
</dbReference>
<dbReference type="PDB" id="7PO3">
    <property type="method" value="EM"/>
    <property type="resolution" value="2.92 A"/>
    <property type="chains" value="B=1-296"/>
</dbReference>
<dbReference type="PDB" id="7QI4">
    <property type="method" value="EM"/>
    <property type="resolution" value="2.21 A"/>
    <property type="chains" value="AB=1-296"/>
</dbReference>
<dbReference type="PDB" id="7QI5">
    <property type="method" value="EM"/>
    <property type="resolution" value="2.63 A"/>
    <property type="chains" value="AB=1-296"/>
</dbReference>
<dbReference type="PDB" id="7QI6">
    <property type="method" value="EM"/>
    <property type="resolution" value="2.98 A"/>
    <property type="chains" value="AB=1-296"/>
</dbReference>
<dbReference type="PDB" id="8ANY">
    <property type="method" value="EM"/>
    <property type="resolution" value="2.85 A"/>
    <property type="chains" value="AB=1-296"/>
</dbReference>
<dbReference type="PDB" id="8CSP">
    <property type="method" value="EM"/>
    <property type="resolution" value="2.66 A"/>
    <property type="chains" value="B=1-296"/>
</dbReference>
<dbReference type="PDB" id="8CSQ">
    <property type="method" value="EM"/>
    <property type="resolution" value="2.54 A"/>
    <property type="chains" value="B=1-296"/>
</dbReference>
<dbReference type="PDB" id="8CSR">
    <property type="method" value="EM"/>
    <property type="resolution" value="2.54 A"/>
    <property type="chains" value="B=1-296"/>
</dbReference>
<dbReference type="PDB" id="8CSS">
    <property type="method" value="EM"/>
    <property type="resolution" value="2.36 A"/>
    <property type="chains" value="B=1-296"/>
</dbReference>
<dbReference type="PDB" id="8CST">
    <property type="method" value="EM"/>
    <property type="resolution" value="2.85 A"/>
    <property type="chains" value="B=1-296"/>
</dbReference>
<dbReference type="PDB" id="8CSU">
    <property type="method" value="EM"/>
    <property type="resolution" value="3.03 A"/>
    <property type="chains" value="B=1-296"/>
</dbReference>
<dbReference type="PDB" id="8K2A">
    <property type="method" value="EM"/>
    <property type="resolution" value="2.90 A"/>
    <property type="chains" value="SB=1-296"/>
</dbReference>
<dbReference type="PDB" id="8OIR">
    <property type="method" value="EM"/>
    <property type="resolution" value="3.10 A"/>
    <property type="chains" value="Ab=1-296"/>
</dbReference>
<dbReference type="PDB" id="8OIS">
    <property type="method" value="EM"/>
    <property type="resolution" value="3.00 A"/>
    <property type="chains" value="Ab=1-296"/>
</dbReference>
<dbReference type="PDB" id="8QRK">
    <property type="method" value="EM"/>
    <property type="resolution" value="6.69 A"/>
    <property type="chains" value="B=1-296"/>
</dbReference>
<dbReference type="PDB" id="8QRL">
    <property type="method" value="EM"/>
    <property type="resolution" value="3.34 A"/>
    <property type="chains" value="B=1-296"/>
</dbReference>
<dbReference type="PDB" id="8QRM">
    <property type="method" value="EM"/>
    <property type="resolution" value="3.05 A"/>
    <property type="chains" value="B=1-296"/>
</dbReference>
<dbReference type="PDB" id="8QRN">
    <property type="method" value="EM"/>
    <property type="resolution" value="2.98 A"/>
    <property type="chains" value="B=1-296"/>
</dbReference>
<dbReference type="PDB" id="8RRI">
    <property type="method" value="EM"/>
    <property type="resolution" value="2.40 A"/>
    <property type="chains" value="AB=1-296"/>
</dbReference>
<dbReference type="PDB" id="8XT0">
    <property type="method" value="EM"/>
    <property type="resolution" value="3.20 A"/>
    <property type="chains" value="SB=1-296"/>
</dbReference>
<dbReference type="PDB" id="8XT2">
    <property type="method" value="EM"/>
    <property type="resolution" value="3.30 A"/>
    <property type="chains" value="SB=1-296"/>
</dbReference>
<dbReference type="PDBsum" id="3J9M"/>
<dbReference type="PDBsum" id="6NU2"/>
<dbReference type="PDBsum" id="6NU3"/>
<dbReference type="PDBsum" id="6RW4"/>
<dbReference type="PDBsum" id="6RW5"/>
<dbReference type="PDBsum" id="6VLZ"/>
<dbReference type="PDBsum" id="6VMI"/>
<dbReference type="PDBsum" id="6ZM5"/>
<dbReference type="PDBsum" id="6ZM6"/>
<dbReference type="PDBsum" id="6ZS9"/>
<dbReference type="PDBsum" id="6ZSA"/>
<dbReference type="PDBsum" id="6ZSB"/>
<dbReference type="PDBsum" id="6ZSC"/>
<dbReference type="PDBsum" id="6ZSD"/>
<dbReference type="PDBsum" id="6ZSE"/>
<dbReference type="PDBsum" id="6ZSG"/>
<dbReference type="PDBsum" id="7A5F"/>
<dbReference type="PDBsum" id="7A5G"/>
<dbReference type="PDBsum" id="7A5I"/>
<dbReference type="PDBsum" id="7A5K"/>
<dbReference type="PDBsum" id="7L08"/>
<dbReference type="PDBsum" id="7OG4"/>
<dbReference type="PDBsum" id="7P2E"/>
<dbReference type="PDBsum" id="7PNX"/>
<dbReference type="PDBsum" id="7PNY"/>
<dbReference type="PDBsum" id="7PNZ"/>
<dbReference type="PDBsum" id="7PO0"/>
<dbReference type="PDBsum" id="7PO1"/>
<dbReference type="PDBsum" id="7PO2"/>
<dbReference type="PDBsum" id="7PO3"/>
<dbReference type="PDBsum" id="7QI4"/>
<dbReference type="PDBsum" id="7QI5"/>
<dbReference type="PDBsum" id="7QI6"/>
<dbReference type="PDBsum" id="8ANY"/>
<dbReference type="PDBsum" id="8CSP"/>
<dbReference type="PDBsum" id="8CSQ"/>
<dbReference type="PDBsum" id="8CSR"/>
<dbReference type="PDBsum" id="8CSS"/>
<dbReference type="PDBsum" id="8CST"/>
<dbReference type="PDBsum" id="8CSU"/>
<dbReference type="PDBsum" id="8K2A"/>
<dbReference type="PDBsum" id="8OIR"/>
<dbReference type="PDBsum" id="8OIS"/>
<dbReference type="PDBsum" id="8QRK"/>
<dbReference type="PDBsum" id="8QRL"/>
<dbReference type="PDBsum" id="8QRM"/>
<dbReference type="PDBsum" id="8QRN"/>
<dbReference type="PDBsum" id="8RRI"/>
<dbReference type="PDBsum" id="8XT0"/>
<dbReference type="PDBsum" id="8XT2"/>
<dbReference type="EMDB" id="EMD-0514"/>
<dbReference type="EMDB" id="EMD-0515"/>
<dbReference type="EMDB" id="EMD-10021"/>
<dbReference type="EMDB" id="EMD-10022"/>
<dbReference type="EMDB" id="EMD-11278"/>
<dbReference type="EMDB" id="EMD-11279"/>
<dbReference type="EMDB" id="EMD-11390"/>
<dbReference type="EMDB" id="EMD-11391"/>
<dbReference type="EMDB" id="EMD-11392"/>
<dbReference type="EMDB" id="EMD-11393"/>
<dbReference type="EMDB" id="EMD-11394"/>
<dbReference type="EMDB" id="EMD-11395"/>
<dbReference type="EMDB" id="EMD-11397"/>
<dbReference type="EMDB" id="EMD-11641"/>
<dbReference type="EMDB" id="EMD-11642"/>
<dbReference type="EMDB" id="EMD-11644"/>
<dbReference type="EMDB" id="EMD-11646"/>
<dbReference type="EMDB" id="EMD-12877"/>
<dbReference type="EMDB" id="EMD-13170"/>
<dbReference type="EMDB" id="EMD-13555"/>
<dbReference type="EMDB" id="EMD-13556"/>
<dbReference type="EMDB" id="EMD-13557"/>
<dbReference type="EMDB" id="EMD-13558"/>
<dbReference type="EMDB" id="EMD-13559"/>
<dbReference type="EMDB" id="EMD-13560"/>
<dbReference type="EMDB" id="EMD-13561"/>
<dbReference type="EMDB" id="EMD-13980"/>
<dbReference type="EMDB" id="EMD-13981"/>
<dbReference type="EMDB" id="EMD-13982"/>
<dbReference type="EMDB" id="EMD-15544"/>
<dbReference type="EMDB" id="EMD-16897"/>
<dbReference type="EMDB" id="EMD-16898"/>
<dbReference type="EMDB" id="EMD-19460"/>
<dbReference type="EMDB" id="EMD-21233"/>
<dbReference type="EMDB" id="EMD-21242"/>
<dbReference type="EMDB" id="EMD-23096"/>
<dbReference type="EMDB" id="EMD-26966"/>
<dbReference type="EMDB" id="EMD-26967"/>
<dbReference type="EMDB" id="EMD-26968"/>
<dbReference type="EMDB" id="EMD-26969"/>
<dbReference type="EMDB" id="EMD-26970"/>
<dbReference type="EMDB" id="EMD-26971"/>
<dbReference type="EMDB" id="EMD-36836"/>
<dbReference type="EMDB" id="EMD-38632"/>
<dbReference type="EMDB" id="EMD-38634"/>
<dbReference type="SMR" id="Q9Y399"/>
<dbReference type="BioGRID" id="119304">
    <property type="interactions" value="297"/>
</dbReference>
<dbReference type="ComplexPortal" id="CPX-5225">
    <property type="entry name" value="28S mitochondrial small ribosomal subunit"/>
</dbReference>
<dbReference type="CORUM" id="Q9Y399"/>
<dbReference type="FunCoup" id="Q9Y399">
    <property type="interactions" value="1400"/>
</dbReference>
<dbReference type="IntAct" id="Q9Y399">
    <property type="interactions" value="150"/>
</dbReference>
<dbReference type="MINT" id="Q9Y399"/>
<dbReference type="STRING" id="9606.ENSP00000360850"/>
<dbReference type="GlyGen" id="Q9Y399">
    <property type="glycosylation" value="1 site, 1 O-linked glycan (1 site)"/>
</dbReference>
<dbReference type="iPTMnet" id="Q9Y399"/>
<dbReference type="PhosphoSitePlus" id="Q9Y399"/>
<dbReference type="SwissPalm" id="Q9Y399"/>
<dbReference type="BioMuta" id="MRPS2"/>
<dbReference type="DMDM" id="24212389"/>
<dbReference type="jPOST" id="Q9Y399"/>
<dbReference type="MassIVE" id="Q9Y399"/>
<dbReference type="PaxDb" id="9606-ENSP00000360850"/>
<dbReference type="PeptideAtlas" id="Q9Y399"/>
<dbReference type="ProteomicsDB" id="85989"/>
<dbReference type="Pumba" id="Q9Y399"/>
<dbReference type="Antibodypedia" id="32046">
    <property type="antibodies" value="233 antibodies from 25 providers"/>
</dbReference>
<dbReference type="DNASU" id="51116"/>
<dbReference type="Ensembl" id="ENST00000241600.10">
    <property type="protein sequence ID" value="ENSP00000241600.5"/>
    <property type="gene ID" value="ENSG00000122140.13"/>
</dbReference>
<dbReference type="Ensembl" id="ENST00000371785.5">
    <property type="protein sequence ID" value="ENSP00000360850.1"/>
    <property type="gene ID" value="ENSG00000122140.13"/>
</dbReference>
<dbReference type="GeneID" id="51116"/>
<dbReference type="KEGG" id="hsa:51116"/>
<dbReference type="MANE-Select" id="ENST00000241600.10">
    <property type="protein sequence ID" value="ENSP00000241600.5"/>
    <property type="RefSeq nucleotide sequence ID" value="NM_016034.5"/>
    <property type="RefSeq protein sequence ID" value="NP_057118.1"/>
</dbReference>
<dbReference type="UCSC" id="uc004cfv.6">
    <property type="organism name" value="human"/>
</dbReference>
<dbReference type="AGR" id="HGNC:14495"/>
<dbReference type="CTD" id="51116"/>
<dbReference type="DisGeNET" id="51116"/>
<dbReference type="GeneCards" id="MRPS2"/>
<dbReference type="HGNC" id="HGNC:14495">
    <property type="gene designation" value="MRPS2"/>
</dbReference>
<dbReference type="HPA" id="ENSG00000122140">
    <property type="expression patterns" value="Low tissue specificity"/>
</dbReference>
<dbReference type="MalaCards" id="MRPS2"/>
<dbReference type="MIM" id="611971">
    <property type="type" value="gene"/>
</dbReference>
<dbReference type="MIM" id="617950">
    <property type="type" value="phenotype"/>
</dbReference>
<dbReference type="neXtProt" id="NX_Q9Y399"/>
<dbReference type="OpenTargets" id="ENSG00000122140"/>
<dbReference type="PharmGKB" id="PA31007"/>
<dbReference type="VEuPathDB" id="HostDB:ENSG00000122140"/>
<dbReference type="eggNOG" id="KOG0832">
    <property type="taxonomic scope" value="Eukaryota"/>
</dbReference>
<dbReference type="GeneTree" id="ENSGT00390000017382"/>
<dbReference type="InParanoid" id="Q9Y399"/>
<dbReference type="OMA" id="PYIFMEK"/>
<dbReference type="OrthoDB" id="2320368at2759"/>
<dbReference type="PAN-GO" id="Q9Y399">
    <property type="GO annotations" value="2 GO annotations based on evolutionary models"/>
</dbReference>
<dbReference type="PhylomeDB" id="Q9Y399"/>
<dbReference type="TreeFam" id="TF313480"/>
<dbReference type="PathwayCommons" id="Q9Y399"/>
<dbReference type="Reactome" id="R-HSA-5368286">
    <property type="pathway name" value="Mitochondrial translation initiation"/>
</dbReference>
<dbReference type="Reactome" id="R-HSA-5389840">
    <property type="pathway name" value="Mitochondrial translation elongation"/>
</dbReference>
<dbReference type="Reactome" id="R-HSA-5419276">
    <property type="pathway name" value="Mitochondrial translation termination"/>
</dbReference>
<dbReference type="Reactome" id="R-HSA-9837999">
    <property type="pathway name" value="Mitochondrial protein degradation"/>
</dbReference>
<dbReference type="SignaLink" id="Q9Y399"/>
<dbReference type="SIGNOR" id="Q9Y399"/>
<dbReference type="BioGRID-ORCS" id="51116">
    <property type="hits" value="333 hits in 1165 CRISPR screens"/>
</dbReference>
<dbReference type="ChiTaRS" id="MRPS2">
    <property type="organism name" value="human"/>
</dbReference>
<dbReference type="GenomeRNAi" id="51116"/>
<dbReference type="Pharos" id="Q9Y399">
    <property type="development level" value="Tbio"/>
</dbReference>
<dbReference type="PRO" id="PR:Q9Y399"/>
<dbReference type="Proteomes" id="UP000005640">
    <property type="component" value="Chromosome 9"/>
</dbReference>
<dbReference type="RNAct" id="Q9Y399">
    <property type="molecule type" value="protein"/>
</dbReference>
<dbReference type="Bgee" id="ENSG00000122140">
    <property type="expression patterns" value="Expressed in apex of heart and 188 other cell types or tissues"/>
</dbReference>
<dbReference type="ExpressionAtlas" id="Q9Y399">
    <property type="expression patterns" value="baseline and differential"/>
</dbReference>
<dbReference type="GO" id="GO:0005743">
    <property type="term" value="C:mitochondrial inner membrane"/>
    <property type="evidence" value="ECO:0000304"/>
    <property type="project" value="Reactome"/>
</dbReference>
<dbReference type="GO" id="GO:0005759">
    <property type="term" value="C:mitochondrial matrix"/>
    <property type="evidence" value="ECO:0000304"/>
    <property type="project" value="Reactome"/>
</dbReference>
<dbReference type="GO" id="GO:0005763">
    <property type="term" value="C:mitochondrial small ribosomal subunit"/>
    <property type="evidence" value="ECO:0000314"/>
    <property type="project" value="UniProtKB"/>
</dbReference>
<dbReference type="GO" id="GO:0005739">
    <property type="term" value="C:mitochondrion"/>
    <property type="evidence" value="ECO:0000314"/>
    <property type="project" value="HPA"/>
</dbReference>
<dbReference type="GO" id="GO:0003735">
    <property type="term" value="F:structural constituent of ribosome"/>
    <property type="evidence" value="ECO:0000250"/>
    <property type="project" value="UniProtKB"/>
</dbReference>
<dbReference type="GO" id="GO:0061668">
    <property type="term" value="P:mitochondrial ribosome assembly"/>
    <property type="evidence" value="ECO:0000315"/>
    <property type="project" value="UniProtKB"/>
</dbReference>
<dbReference type="GO" id="GO:0032543">
    <property type="term" value="P:mitochondrial translation"/>
    <property type="evidence" value="ECO:0000250"/>
    <property type="project" value="UniProtKB"/>
</dbReference>
<dbReference type="CDD" id="cd01425">
    <property type="entry name" value="RPS2"/>
    <property type="match status" value="1"/>
</dbReference>
<dbReference type="FunFam" id="3.40.50.10490:FF:000026">
    <property type="entry name" value="28S ribosomal protein S2, mitochondrial"/>
    <property type="match status" value="1"/>
</dbReference>
<dbReference type="Gene3D" id="3.40.50.10490">
    <property type="entry name" value="Glucose-6-phosphate isomerase like protein, domain 1"/>
    <property type="match status" value="1"/>
</dbReference>
<dbReference type="HAMAP" id="MF_00291_B">
    <property type="entry name" value="Ribosomal_uS2_B"/>
    <property type="match status" value="1"/>
</dbReference>
<dbReference type="InterPro" id="IPR001865">
    <property type="entry name" value="Ribosomal_uS2"/>
</dbReference>
<dbReference type="InterPro" id="IPR005706">
    <property type="entry name" value="Ribosomal_uS2_bac/mit/plastid"/>
</dbReference>
<dbReference type="InterPro" id="IPR018130">
    <property type="entry name" value="Ribosomal_uS2_CS"/>
</dbReference>
<dbReference type="InterPro" id="IPR023591">
    <property type="entry name" value="Ribosomal_uS2_flav_dom_sf"/>
</dbReference>
<dbReference type="PANTHER" id="PTHR12534">
    <property type="entry name" value="30S RIBOSOMAL PROTEIN S2 PROKARYOTIC AND ORGANELLAR"/>
    <property type="match status" value="1"/>
</dbReference>
<dbReference type="PANTHER" id="PTHR12534:SF0">
    <property type="entry name" value="SMALL RIBOSOMAL SUBUNIT PROTEIN US2M"/>
    <property type="match status" value="1"/>
</dbReference>
<dbReference type="Pfam" id="PF00318">
    <property type="entry name" value="Ribosomal_S2"/>
    <property type="match status" value="2"/>
</dbReference>
<dbReference type="PRINTS" id="PR00395">
    <property type="entry name" value="RIBOSOMALS2"/>
</dbReference>
<dbReference type="SUPFAM" id="SSF52313">
    <property type="entry name" value="Ribosomal protein S2"/>
    <property type="match status" value="1"/>
</dbReference>
<dbReference type="PROSITE" id="PS00962">
    <property type="entry name" value="RIBOSOMAL_S2_1"/>
    <property type="match status" value="1"/>
</dbReference>
<sequence length="296" mass="33249">MATSSAALPRILGAGARAPSRWLGFLGKATPRPARPSRRTLGSATALMIRESEDSTDFNDKILNEPLKHSDFFNVKELFSVRSLFDARVHLGHKAGCRHRFMEPYIFGSRLDHDIIDLEQTATHLQLALNFTAHMAYRKGIILFISRNRQFSYLIENMARDCGEYAHTRYFRGGMLTNARLLFGPTVRLPDLIIFLHTLNNIFEPHVAVRDAAKMNIPTVGIVDTNCNPCLITYPVPGNDDSPLAVHLYCRLFQTAITRAKEKRQQVEALYRLQGQKEPGDQGPAHPPGADMSHSL</sequence>
<comment type="function">
    <text evidence="3">Required for mitoribosome formation and stability, and mitochondrial translation.</text>
</comment>
<comment type="subunit">
    <text evidence="2">Component of the mitochondrial small ribosomal subunit (mt-SSU). Mature mammalian 55S mitochondrial ribosomes consist of a small (28S) and a large (39S) subunit. The 28S small subunit contains a 12S ribosomal RNA (12S mt-rRNA) and 30 different proteins. The 39S large subunit contains a 16S rRNA (16S mt-rRNA), a copy of mitochondrial valine transfer RNA (mt-tRNA(Val)), which plays an integral structural role, and 52 different proteins.</text>
</comment>
<comment type="subcellular location">
    <subcellularLocation>
        <location evidence="2">Mitochondrion</location>
    </subcellularLocation>
</comment>
<comment type="disease" evidence="3">
    <disease id="DI-05238">
        <name>Combined oxidative phosphorylation deficiency 36</name>
        <acronym>COXPD36</acronym>
        <description>An autosomal recessive, multisystem disease resulting from deficiencies of mitochondrial respiratory enzyme complexes and mitochondrial dysfunction. Clinical manifestations include sensorineural hearing impairment, mild developmental delay, hypoglycemia, and intellectual disability.</description>
        <dbReference type="MIM" id="617950"/>
    </disease>
    <text>The disease is caused by variants affecting the gene represented in this entry.</text>
</comment>
<comment type="similarity">
    <text evidence="5">Belongs to the universal ribosomal protein uS2 family.</text>
</comment>
<comment type="sequence caution" evidence="5">
    <conflict type="erroneous translation">
        <sequence resource="EMBL-CDS" id="AAH04905"/>
    </conflict>
    <text>Wrong choice of frame.</text>
</comment>
<gene>
    <name type="primary">MRPS2</name>
    <name type="ORF">CGI-91</name>
</gene>
<name>RT02_HUMAN</name>
<feature type="chain" id="PRO_0000134343" description="Small ribosomal subunit protein uS2m">
    <location>
        <begin position="1"/>
        <end position="296"/>
    </location>
</feature>
<feature type="region of interest" description="Disordered" evidence="1">
    <location>
        <begin position="274"/>
        <end position="296"/>
    </location>
</feature>
<feature type="sequence variant" id="VAR_080787" description="In COXPD36; results in impaired assembly of the small mitoribosomal subunit and impaired mitochondrial translation in patient cells; dbSNP:rs761334309." evidence="3">
    <original>R</original>
    <variation>C</variation>
    <location>
        <position position="110"/>
    </location>
</feature>
<feature type="sequence variant" id="VAR_034479" description="In dbSNP:rs35140806.">
    <original>D</original>
    <variation>G</variation>
    <location>
        <position position="112"/>
    </location>
</feature>
<feature type="sequence variant" id="VAR_080788" description="In COXPD36; results in impaired assembly of the small mitoribosomal subunit and impaired mitochondrial translation in patient cells; dbSNP:rs201229537." evidence="3">
    <original>D</original>
    <variation>N</variation>
    <location>
        <position position="114"/>
    </location>
</feature>
<feature type="sequence variant" id="VAR_080789" description="In COXPD36; results in impaired assembly of the small mitoribosomal subunit and impaired mitochondrial translation in patient cells; dbSNP:rs758539748." evidence="3">
    <original>R</original>
    <variation>H</variation>
    <location>
        <position position="138"/>
    </location>
</feature>
<feature type="sequence variant" id="VAR_034480" description="In dbSNP:rs35293407.">
    <original>M</original>
    <variation>V</variation>
    <location>
        <position position="158"/>
    </location>
</feature>
<feature type="sequence variant" id="VAR_020128" description="In dbSNP:rs3748199.">
    <original>H</original>
    <variation>R</variation>
    <location>
        <position position="294"/>
    </location>
</feature>
<feature type="helix" evidence="8">
    <location>
        <begin position="56"/>
        <end position="62"/>
    </location>
</feature>
<feature type="turn" evidence="10">
    <location>
        <begin position="63"/>
        <end position="65"/>
    </location>
</feature>
<feature type="helix" evidence="8">
    <location>
        <begin position="66"/>
        <end position="68"/>
    </location>
</feature>
<feature type="strand" evidence="9">
    <location>
        <begin position="69"/>
        <end position="73"/>
    </location>
</feature>
<feature type="helix" evidence="8">
    <location>
        <begin position="75"/>
        <end position="78"/>
    </location>
</feature>
<feature type="helix" evidence="8">
    <location>
        <begin position="81"/>
        <end position="86"/>
    </location>
</feature>
<feature type="turn" evidence="8">
    <location>
        <begin position="87"/>
        <end position="90"/>
    </location>
</feature>
<feature type="strand" evidence="8">
    <location>
        <begin position="91"/>
        <end position="94"/>
    </location>
</feature>
<feature type="helix" evidence="8">
    <location>
        <begin position="95"/>
        <end position="97"/>
    </location>
</feature>
<feature type="helix" evidence="8">
    <location>
        <begin position="100"/>
        <end position="105"/>
    </location>
</feature>
<feature type="strand" evidence="8">
    <location>
        <begin position="106"/>
        <end position="110"/>
    </location>
</feature>
<feature type="strand" evidence="8">
    <location>
        <begin position="113"/>
        <end position="116"/>
    </location>
</feature>
<feature type="helix" evidence="8">
    <location>
        <begin position="118"/>
        <end position="137"/>
    </location>
</feature>
<feature type="strand" evidence="8">
    <location>
        <begin position="142"/>
        <end position="145"/>
    </location>
</feature>
<feature type="helix" evidence="8">
    <location>
        <begin position="149"/>
        <end position="151"/>
    </location>
</feature>
<feature type="helix" evidence="8">
    <location>
        <begin position="152"/>
        <end position="161"/>
    </location>
</feature>
<feature type="strand" evidence="8">
    <location>
        <begin position="165"/>
        <end position="167"/>
    </location>
</feature>
<feature type="turn" evidence="8">
    <location>
        <begin position="173"/>
        <end position="178"/>
    </location>
</feature>
<feature type="helix" evidence="8">
    <location>
        <begin position="179"/>
        <end position="183"/>
    </location>
</feature>
<feature type="strand" evidence="8">
    <location>
        <begin position="191"/>
        <end position="196"/>
    </location>
</feature>
<feature type="strand" evidence="8">
    <location>
        <begin position="203"/>
        <end position="205"/>
    </location>
</feature>
<feature type="helix" evidence="8">
    <location>
        <begin position="207"/>
        <end position="214"/>
    </location>
</feature>
<feature type="strand" evidence="8">
    <location>
        <begin position="219"/>
        <end position="223"/>
    </location>
</feature>
<feature type="strand" evidence="8">
    <location>
        <begin position="233"/>
        <end position="237"/>
    </location>
</feature>
<feature type="strand" evidence="8">
    <location>
        <begin position="240"/>
        <end position="242"/>
    </location>
</feature>
<feature type="helix" evidence="8">
    <location>
        <begin position="243"/>
        <end position="273"/>
    </location>
</feature>
<accession>Q9Y399</accession>
<accession>Q5T899</accession>
<accession>Q9BSQ4</accession>
<organism>
    <name type="scientific">Homo sapiens</name>
    <name type="common">Human</name>
    <dbReference type="NCBI Taxonomy" id="9606"/>
    <lineage>
        <taxon>Eukaryota</taxon>
        <taxon>Metazoa</taxon>
        <taxon>Chordata</taxon>
        <taxon>Craniata</taxon>
        <taxon>Vertebrata</taxon>
        <taxon>Euteleostomi</taxon>
        <taxon>Mammalia</taxon>
        <taxon>Eutheria</taxon>
        <taxon>Euarchontoglires</taxon>
        <taxon>Primates</taxon>
        <taxon>Haplorrhini</taxon>
        <taxon>Catarrhini</taxon>
        <taxon>Hominidae</taxon>
        <taxon>Homo</taxon>
    </lineage>
</organism>
<keyword id="KW-0002">3D-structure</keyword>
<keyword id="KW-0225">Disease variant</keyword>
<keyword id="KW-0496">Mitochondrion</keyword>
<keyword id="KW-1274">Primary mitochondrial disease</keyword>
<keyword id="KW-1267">Proteomics identification</keyword>
<keyword id="KW-1185">Reference proteome</keyword>
<keyword id="KW-0687">Ribonucleoprotein</keyword>
<keyword id="KW-0689">Ribosomal protein</keyword>
<reference evidence="6" key="1">
    <citation type="journal article" date="2001" name="J. Biol. Chem.">
        <title>Proteomic analysis of the mammalian mitochondrial ribosome. Identification of protein components in the 28S small subunit.</title>
        <authorList>
            <person name="Suzuki T."/>
            <person name="Terasaki M."/>
            <person name="Takemoto-Hori C."/>
            <person name="Hanada T."/>
            <person name="Ueda T."/>
            <person name="Wada A."/>
            <person name="Watanabe K."/>
        </authorList>
    </citation>
    <scope>NUCLEOTIDE SEQUENCE [MRNA]</scope>
</reference>
<reference key="2">
    <citation type="journal article" date="2000" name="Genome Res.">
        <title>Identification of novel human genes evolutionarily conserved in Caenorhabditis elegans by comparative proteomics.</title>
        <authorList>
            <person name="Lai C.-H."/>
            <person name="Chou C.-Y."/>
            <person name="Ch'ang L.-Y."/>
            <person name="Liu C.-S."/>
            <person name="Lin W.-C."/>
        </authorList>
    </citation>
    <scope>NUCLEOTIDE SEQUENCE [LARGE SCALE MRNA]</scope>
</reference>
<reference key="3">
    <citation type="journal article" date="2004" name="Nature">
        <title>DNA sequence and analysis of human chromosome 9.</title>
        <authorList>
            <person name="Humphray S.J."/>
            <person name="Oliver K."/>
            <person name="Hunt A.R."/>
            <person name="Plumb R.W."/>
            <person name="Loveland J.E."/>
            <person name="Howe K.L."/>
            <person name="Andrews T.D."/>
            <person name="Searle S."/>
            <person name="Hunt S.E."/>
            <person name="Scott C.E."/>
            <person name="Jones M.C."/>
            <person name="Ainscough R."/>
            <person name="Almeida J.P."/>
            <person name="Ambrose K.D."/>
            <person name="Ashwell R.I.S."/>
            <person name="Babbage A.K."/>
            <person name="Babbage S."/>
            <person name="Bagguley C.L."/>
            <person name="Bailey J."/>
            <person name="Banerjee R."/>
            <person name="Barker D.J."/>
            <person name="Barlow K.F."/>
            <person name="Bates K."/>
            <person name="Beasley H."/>
            <person name="Beasley O."/>
            <person name="Bird C.P."/>
            <person name="Bray-Allen S."/>
            <person name="Brown A.J."/>
            <person name="Brown J.Y."/>
            <person name="Burford D."/>
            <person name="Burrill W."/>
            <person name="Burton J."/>
            <person name="Carder C."/>
            <person name="Carter N.P."/>
            <person name="Chapman J.C."/>
            <person name="Chen Y."/>
            <person name="Clarke G."/>
            <person name="Clark S.Y."/>
            <person name="Clee C.M."/>
            <person name="Clegg S."/>
            <person name="Collier R.E."/>
            <person name="Corby N."/>
            <person name="Crosier M."/>
            <person name="Cummings A.T."/>
            <person name="Davies J."/>
            <person name="Dhami P."/>
            <person name="Dunn M."/>
            <person name="Dutta I."/>
            <person name="Dyer L.W."/>
            <person name="Earthrowl M.E."/>
            <person name="Faulkner L."/>
            <person name="Fleming C.J."/>
            <person name="Frankish A."/>
            <person name="Frankland J.A."/>
            <person name="French L."/>
            <person name="Fricker D.G."/>
            <person name="Garner P."/>
            <person name="Garnett J."/>
            <person name="Ghori J."/>
            <person name="Gilbert J.G.R."/>
            <person name="Glison C."/>
            <person name="Grafham D.V."/>
            <person name="Gribble S."/>
            <person name="Griffiths C."/>
            <person name="Griffiths-Jones S."/>
            <person name="Grocock R."/>
            <person name="Guy J."/>
            <person name="Hall R.E."/>
            <person name="Hammond S."/>
            <person name="Harley J.L."/>
            <person name="Harrison E.S.I."/>
            <person name="Hart E.A."/>
            <person name="Heath P.D."/>
            <person name="Henderson C.D."/>
            <person name="Hopkins B.L."/>
            <person name="Howard P.J."/>
            <person name="Howden P.J."/>
            <person name="Huckle E."/>
            <person name="Johnson C."/>
            <person name="Johnson D."/>
            <person name="Joy A.A."/>
            <person name="Kay M."/>
            <person name="Keenan S."/>
            <person name="Kershaw J.K."/>
            <person name="Kimberley A.M."/>
            <person name="King A."/>
            <person name="Knights A."/>
            <person name="Laird G.K."/>
            <person name="Langford C."/>
            <person name="Lawlor S."/>
            <person name="Leongamornlert D.A."/>
            <person name="Leversha M."/>
            <person name="Lloyd C."/>
            <person name="Lloyd D.M."/>
            <person name="Lovell J."/>
            <person name="Martin S."/>
            <person name="Mashreghi-Mohammadi M."/>
            <person name="Matthews L."/>
            <person name="McLaren S."/>
            <person name="McLay K.E."/>
            <person name="McMurray A."/>
            <person name="Milne S."/>
            <person name="Nickerson T."/>
            <person name="Nisbett J."/>
            <person name="Nordsiek G."/>
            <person name="Pearce A.V."/>
            <person name="Peck A.I."/>
            <person name="Porter K.M."/>
            <person name="Pandian R."/>
            <person name="Pelan S."/>
            <person name="Phillimore B."/>
            <person name="Povey S."/>
            <person name="Ramsey Y."/>
            <person name="Rand V."/>
            <person name="Scharfe M."/>
            <person name="Sehra H.K."/>
            <person name="Shownkeen R."/>
            <person name="Sims S.K."/>
            <person name="Skuce C.D."/>
            <person name="Smith M."/>
            <person name="Steward C.A."/>
            <person name="Swarbreck D."/>
            <person name="Sycamore N."/>
            <person name="Tester J."/>
            <person name="Thorpe A."/>
            <person name="Tracey A."/>
            <person name="Tromans A."/>
            <person name="Thomas D.W."/>
            <person name="Wall M."/>
            <person name="Wallis J.M."/>
            <person name="West A.P."/>
            <person name="Whitehead S.L."/>
            <person name="Willey D.L."/>
            <person name="Williams S.A."/>
            <person name="Wilming L."/>
            <person name="Wray P.W."/>
            <person name="Young L."/>
            <person name="Ashurst J.L."/>
            <person name="Coulson A."/>
            <person name="Blocker H."/>
            <person name="Durbin R.M."/>
            <person name="Sulston J.E."/>
            <person name="Hubbard T."/>
            <person name="Jackson M.J."/>
            <person name="Bentley D.R."/>
            <person name="Beck S."/>
            <person name="Rogers J."/>
            <person name="Dunham I."/>
        </authorList>
    </citation>
    <scope>NUCLEOTIDE SEQUENCE [LARGE SCALE GENOMIC DNA]</scope>
</reference>
<reference key="4">
    <citation type="journal article" date="2004" name="Genome Res.">
        <title>The status, quality, and expansion of the NIH full-length cDNA project: the Mammalian Gene Collection (MGC).</title>
        <authorList>
            <consortium name="The MGC Project Team"/>
        </authorList>
    </citation>
    <scope>NUCLEOTIDE SEQUENCE [LARGE SCALE MRNA]</scope>
    <source>
        <tissue>Brain</tissue>
        <tissue>Lung</tissue>
        <tissue>Skin</tissue>
    </source>
</reference>
<reference evidence="5" key="5">
    <citation type="journal article" date="2001" name="J. Biol. Chem.">
        <title>The small subunit of the mammalian mitochondrial ribosome: identification of the full complement of ribosomal proteins present.</title>
        <authorList>
            <person name="Koc E.C."/>
            <person name="Burkhart W."/>
            <person name="Blackburn K."/>
            <person name="Moseley A."/>
            <person name="Spremulli L.L."/>
        </authorList>
    </citation>
    <scope>IDENTIFICATION</scope>
</reference>
<reference key="6">
    <citation type="journal article" date="2011" name="BMC Syst. Biol.">
        <title>Initial characterization of the human central proteome.</title>
        <authorList>
            <person name="Burkard T.R."/>
            <person name="Planyavsky M."/>
            <person name="Kaupe I."/>
            <person name="Breitwieser F.P."/>
            <person name="Buerckstuemmer T."/>
            <person name="Bennett K.L."/>
            <person name="Superti-Furga G."/>
            <person name="Colinge J."/>
        </authorList>
    </citation>
    <scope>IDENTIFICATION BY MASS SPECTROMETRY [LARGE SCALE ANALYSIS]</scope>
</reference>
<reference key="7">
    <citation type="journal article" date="2015" name="Proteomics">
        <title>N-terminome analysis of the human mitochondrial proteome.</title>
        <authorList>
            <person name="Vaca Jacome A.S."/>
            <person name="Rabilloud T."/>
            <person name="Schaeffer-Reiss C."/>
            <person name="Rompais M."/>
            <person name="Ayoub D."/>
            <person name="Lane L."/>
            <person name="Bairoch A."/>
            <person name="Van Dorsselaer A."/>
            <person name="Carapito C."/>
        </authorList>
    </citation>
    <scope>IDENTIFICATION BY MASS SPECTROMETRY [LARGE SCALE ANALYSIS]</scope>
</reference>
<reference evidence="7" key="8">
    <citation type="journal article" date="2015" name="Science">
        <title>Ribosome. The structure of the human mitochondrial ribosome.</title>
        <authorList>
            <person name="Amunts A."/>
            <person name="Brown A."/>
            <person name="Toots J."/>
            <person name="Scheres S.H."/>
            <person name="Ramakrishnan V."/>
        </authorList>
    </citation>
    <scope>STRUCTURE BY ELECTRON MICROSCOPY (3.50 ANGSTROMS)</scope>
    <scope>SUBCELLULAR LOCATION</scope>
    <scope>SUBUNIT</scope>
</reference>
<reference key="9">
    <citation type="journal article" date="2018" name="Am. J. Hum. Genet.">
        <title>Bi-allelic mutations in the mitochondrial ribosomal protein MRPS2 cause sensorineural hearing loss, hypoglycemia, and multiple OXPHOS complex deficiencies.</title>
        <authorList>
            <person name="Gardeitchik T."/>
            <person name="Mohamed M."/>
            <person name="Ruzzenente B."/>
            <person name="Karall D."/>
            <person name="Guerrero-Castillo S."/>
            <person name="Dalloyaux D."/>
            <person name="van den Brand M."/>
            <person name="van Kraaij S."/>
            <person name="van Asbeck E."/>
            <person name="Assouline Z."/>
            <person name="Rio M."/>
            <person name="de Lonlay P."/>
            <person name="Scholl-Buergi S."/>
            <person name="Wolthuis D.F.G.J."/>
            <person name="Hoischen A."/>
            <person name="Rodenburg R.J."/>
            <person name="Sperl W."/>
            <person name="Urban Z."/>
            <person name="Brandt U."/>
            <person name="Mayr J.A."/>
            <person name="Wong S."/>
            <person name="de Brouwer A.P.M."/>
            <person name="Nijtmans L."/>
            <person name="Munnich A."/>
            <person name="Roetig A."/>
            <person name="Wevers R.A."/>
            <person name="Metodiev M.D."/>
            <person name="Morava E."/>
        </authorList>
    </citation>
    <scope>FUNCTION</scope>
    <scope>INVOLVEMENT IN COXPD36</scope>
    <scope>VARIANTS COXPD36 CYS-110; ASN-114 AND HIS-138</scope>
    <scope>CHARACTERIZATION OF VARIANTS COXPD36 CYS-110; ASN-114 AND HIS-138</scope>
</reference>
<protein>
    <recommendedName>
        <fullName evidence="4">Small ribosomal subunit protein uS2m</fullName>
    </recommendedName>
    <alternativeName>
        <fullName>28S ribosomal protein S2, mitochondrial</fullName>
        <shortName>MRP-S2</shortName>
        <shortName>S2mt</shortName>
    </alternativeName>
</protein>
<proteinExistence type="evidence at protein level"/>
<evidence type="ECO:0000256" key="1">
    <source>
        <dbReference type="SAM" id="MobiDB-lite"/>
    </source>
</evidence>
<evidence type="ECO:0000269" key="2">
    <source>
    </source>
</evidence>
<evidence type="ECO:0000269" key="3">
    <source>
    </source>
</evidence>
<evidence type="ECO:0000303" key="4">
    <source>
    </source>
</evidence>
<evidence type="ECO:0000305" key="5"/>
<evidence type="ECO:0000312" key="6">
    <source>
        <dbReference type="EMBL" id="BAB62529.1"/>
    </source>
</evidence>
<evidence type="ECO:0007744" key="7">
    <source>
        <dbReference type="PDB" id="3J9M"/>
    </source>
</evidence>
<evidence type="ECO:0007829" key="8">
    <source>
        <dbReference type="PDB" id="8CSS"/>
    </source>
</evidence>
<evidence type="ECO:0007829" key="9">
    <source>
        <dbReference type="PDB" id="8CSU"/>
    </source>
</evidence>
<evidence type="ECO:0007829" key="10">
    <source>
        <dbReference type="PDB" id="8QRN"/>
    </source>
</evidence>